<dbReference type="EC" id="1.16.1.7" evidence="2"/>
<dbReference type="EMBL" id="AE003852">
    <property type="protein sequence ID" value="AAF95354.1"/>
    <property type="molecule type" value="Genomic_DNA"/>
</dbReference>
<dbReference type="PIR" id="C82104">
    <property type="entry name" value="C82104"/>
</dbReference>
<dbReference type="RefSeq" id="NP_231841.1">
    <property type="nucleotide sequence ID" value="NC_002505.1"/>
</dbReference>
<dbReference type="RefSeq" id="WP_000064348.1">
    <property type="nucleotide sequence ID" value="NZ_LT906614.1"/>
</dbReference>
<dbReference type="SMR" id="P0C6Q2"/>
<dbReference type="STRING" id="243277.VC_2210"/>
<dbReference type="DNASU" id="2613249"/>
<dbReference type="EnsemblBacteria" id="AAF95354">
    <property type="protein sequence ID" value="AAF95354"/>
    <property type="gene ID" value="VC_2210"/>
</dbReference>
<dbReference type="KEGG" id="vch:VC_2210"/>
<dbReference type="PATRIC" id="fig|243277.26.peg.2108"/>
<dbReference type="eggNOG" id="COG2375">
    <property type="taxonomic scope" value="Bacteria"/>
</dbReference>
<dbReference type="HOGENOM" id="CLU_040923_3_1_6"/>
<dbReference type="Proteomes" id="UP000000584">
    <property type="component" value="Chromosome 1"/>
</dbReference>
<dbReference type="GO" id="GO:0005737">
    <property type="term" value="C:cytoplasm"/>
    <property type="evidence" value="ECO:0007669"/>
    <property type="project" value="UniProtKB-SubCell"/>
</dbReference>
<dbReference type="GO" id="GO:0071949">
    <property type="term" value="F:FAD binding"/>
    <property type="evidence" value="ECO:0000318"/>
    <property type="project" value="GO_Central"/>
</dbReference>
<dbReference type="GO" id="GO:0140618">
    <property type="term" value="F:ferric-chelate reductase (NADH) activity"/>
    <property type="evidence" value="ECO:0000250"/>
    <property type="project" value="UniProtKB"/>
</dbReference>
<dbReference type="GO" id="GO:0052851">
    <property type="term" value="F:ferric-chelate reductase (NADPH) activity"/>
    <property type="evidence" value="ECO:0000318"/>
    <property type="project" value="GO_Central"/>
</dbReference>
<dbReference type="GO" id="GO:0010106">
    <property type="term" value="P:cellular response to iron ion starvation"/>
    <property type="evidence" value="ECO:0000318"/>
    <property type="project" value="GO_Central"/>
</dbReference>
<dbReference type="GO" id="GO:0033212">
    <property type="term" value="P:iron import into cell"/>
    <property type="evidence" value="ECO:0000318"/>
    <property type="project" value="GO_Central"/>
</dbReference>
<dbReference type="GO" id="GO:0015891">
    <property type="term" value="P:siderophore transport"/>
    <property type="evidence" value="ECO:0000318"/>
    <property type="project" value="GO_Central"/>
</dbReference>
<dbReference type="GO" id="GO:0019536">
    <property type="term" value="P:vibriobactin metabolic process"/>
    <property type="evidence" value="ECO:0000250"/>
    <property type="project" value="UniProtKB"/>
</dbReference>
<dbReference type="CDD" id="cd06193">
    <property type="entry name" value="siderophore_interacting"/>
    <property type="match status" value="1"/>
</dbReference>
<dbReference type="FunFam" id="2.40.30.10:FF:000181">
    <property type="entry name" value="Vibriobactin utilization protein ViuB"/>
    <property type="match status" value="1"/>
</dbReference>
<dbReference type="FunFam" id="3.40.50.80:FF:000038">
    <property type="entry name" value="Vibriobactin utilization protein ViuB"/>
    <property type="match status" value="1"/>
</dbReference>
<dbReference type="Gene3D" id="3.40.50.80">
    <property type="entry name" value="Nucleotide-binding domain of ferredoxin-NADP reductase (FNR) module"/>
    <property type="match status" value="1"/>
</dbReference>
<dbReference type="Gene3D" id="2.40.30.10">
    <property type="entry name" value="Translation factors"/>
    <property type="match status" value="1"/>
</dbReference>
<dbReference type="InterPro" id="IPR013113">
    <property type="entry name" value="FAD-bd_9_SIP"/>
</dbReference>
<dbReference type="InterPro" id="IPR017927">
    <property type="entry name" value="FAD-bd_FR_type"/>
</dbReference>
<dbReference type="InterPro" id="IPR039261">
    <property type="entry name" value="FNR_nucleotide-bd"/>
</dbReference>
<dbReference type="InterPro" id="IPR017938">
    <property type="entry name" value="Riboflavin_synthase-like_b-brl"/>
</dbReference>
<dbReference type="InterPro" id="IPR007037">
    <property type="entry name" value="SIP_C"/>
</dbReference>
<dbReference type="InterPro" id="IPR039374">
    <property type="entry name" value="SIP_fam"/>
</dbReference>
<dbReference type="PANTHER" id="PTHR30157">
    <property type="entry name" value="FERRIC REDUCTASE, NADPH-DEPENDENT"/>
    <property type="match status" value="1"/>
</dbReference>
<dbReference type="PANTHER" id="PTHR30157:SF0">
    <property type="entry name" value="NADPH-DEPENDENT FERRIC-CHELATE REDUCTASE"/>
    <property type="match status" value="1"/>
</dbReference>
<dbReference type="Pfam" id="PF08021">
    <property type="entry name" value="FAD_binding_9"/>
    <property type="match status" value="1"/>
</dbReference>
<dbReference type="Pfam" id="PF04954">
    <property type="entry name" value="SIP"/>
    <property type="match status" value="1"/>
</dbReference>
<dbReference type="SUPFAM" id="SSF63380">
    <property type="entry name" value="Riboflavin synthase domain-like"/>
    <property type="match status" value="1"/>
</dbReference>
<dbReference type="PROSITE" id="PS51384">
    <property type="entry name" value="FAD_FR"/>
    <property type="match status" value="1"/>
</dbReference>
<sequence>MSNEVERVYPRLLDFVRKKYVSKNLLRVTLTGEDLIGFPEDQNGSHIKVFFPNQASGILQLPIREGDKVIWPEHKPVPRAYTVRQYRAQSNELDIDFVVHGEGTPGGGWALKAQTGSQLGLIGPGGPDPLIEPADWHIMAGDLSAVPAISAILEKMPSQAKGYVFLEVDDIEDKHDISHPEQMVIKWLVRDPNQAQPVLAMAIEQLPVPQGAESLSAFVAGENESVIACRKILRNEYRIARDKIYAIPYWKRGKNEEAYHEERHVVMDEEF</sequence>
<protein>
    <recommendedName>
        <fullName evidence="4">Ferric vibriobactin reductase ViuB</fullName>
        <ecNumber evidence="2">1.16.1.7</ecNumber>
    </recommendedName>
    <alternativeName>
        <fullName evidence="4">Ferric chelate reductase</fullName>
        <shortName evidence="4">FCR</shortName>
    </alternativeName>
    <alternativeName>
        <fullName evidence="4">Ferric reductase</fullName>
    </alternativeName>
    <alternativeName>
        <fullName evidence="4">Ferric-vibriobactin utilization protein</fullName>
    </alternativeName>
    <alternativeName>
        <fullName evidence="4">Vibriobactin utilization protein B</fullName>
    </alternativeName>
</protein>
<feature type="chain" id="PRO_0000065871" description="Ferric vibriobactin reductase ViuB">
    <location>
        <begin position="1"/>
        <end position="271"/>
    </location>
</feature>
<feature type="domain" description="FAD-binding FR-type" evidence="3">
    <location>
        <begin position="8"/>
        <end position="131"/>
    </location>
</feature>
<gene>
    <name evidence="5" type="primary">viuB</name>
    <name evidence="5" type="ordered locus">VC_2210</name>
</gene>
<name>VIUB_VIBCH</name>
<accession>P0C6Q2</accession>
<accession>Q56646</accession>
<accession>Q9JQ01</accession>
<comment type="function">
    <text evidence="1 2 4">Ferric-siderophore reductase involved in iron removal from the siderophores after their transport into the cell (Probable). Involved in intracellular removal of iron from iron-vibriobactin complex. Vibriobactin is an iron-chelating compound involved in the transport of iron from the bacterial environment into the cell cytoplasm (By similarity). Ferric-vibriobactin reductase catalyzing the reduction of Fe(3+)-vibriobactin, a catecholate siderophore synthesized by V.cholerae (By similarity).</text>
</comment>
<comment type="catalytic activity">
    <reaction evidence="2">
        <text>2 a Fe(II)-siderophore + NAD(+) + H(+) = 2 a Fe(III)-siderophore + NADH</text>
        <dbReference type="Rhea" id="RHEA:15061"/>
        <dbReference type="Rhea" id="RHEA-COMP:11342"/>
        <dbReference type="Rhea" id="RHEA-COMP:11344"/>
        <dbReference type="ChEBI" id="CHEBI:15378"/>
        <dbReference type="ChEBI" id="CHEBI:29033"/>
        <dbReference type="ChEBI" id="CHEBI:29034"/>
        <dbReference type="ChEBI" id="CHEBI:57540"/>
        <dbReference type="ChEBI" id="CHEBI:57945"/>
        <dbReference type="EC" id="1.16.1.7"/>
    </reaction>
    <physiologicalReaction direction="right-to-left" evidence="2">
        <dbReference type="Rhea" id="RHEA:15063"/>
    </physiologicalReaction>
</comment>
<comment type="cofactor">
    <cofactor evidence="2">
        <name>FAD</name>
        <dbReference type="ChEBI" id="CHEBI:57692"/>
    </cofactor>
</comment>
<comment type="subcellular location">
    <subcellularLocation>
        <location evidence="1">Cytoplasm</location>
    </subcellularLocation>
</comment>
<comment type="similarity">
    <text evidence="4">Belongs to the SIP oxidoreductase family.</text>
</comment>
<keyword id="KW-0963">Cytoplasm</keyword>
<keyword id="KW-0274">FAD</keyword>
<keyword id="KW-0285">Flavoprotein</keyword>
<keyword id="KW-0520">NAD</keyword>
<keyword id="KW-0560">Oxidoreductase</keyword>
<keyword id="KW-1185">Reference proteome</keyword>
<reference key="1">
    <citation type="journal article" date="2000" name="Nature">
        <title>DNA sequence of both chromosomes of the cholera pathogen Vibrio cholerae.</title>
        <authorList>
            <person name="Heidelberg J.F."/>
            <person name="Eisen J.A."/>
            <person name="Nelson W.C."/>
            <person name="Clayton R.A."/>
            <person name="Gwinn M.L."/>
            <person name="Dodson R.J."/>
            <person name="Haft D.H."/>
            <person name="Hickey E.K."/>
            <person name="Peterson J.D."/>
            <person name="Umayam L.A."/>
            <person name="Gill S.R."/>
            <person name="Nelson K.E."/>
            <person name="Read T.D."/>
            <person name="Tettelin H."/>
            <person name="Richardson D.L."/>
            <person name="Ermolaeva M.D."/>
            <person name="Vamathevan J.J."/>
            <person name="Bass S."/>
            <person name="Qin H."/>
            <person name="Dragoi I."/>
            <person name="Sellers P."/>
            <person name="McDonald L.A."/>
            <person name="Utterback T.R."/>
            <person name="Fleischmann R.D."/>
            <person name="Nierman W.C."/>
            <person name="White O."/>
            <person name="Salzberg S.L."/>
            <person name="Smith H.O."/>
            <person name="Colwell R.R."/>
            <person name="Mekalanos J.J."/>
            <person name="Venter J.C."/>
            <person name="Fraser C.M."/>
        </authorList>
    </citation>
    <scope>NUCLEOTIDE SEQUENCE [LARGE SCALE GENOMIC DNA]</scope>
    <source>
        <strain>ATCC 39315 / El Tor Inaba N16961</strain>
    </source>
</reference>
<organism>
    <name type="scientific">Vibrio cholerae serotype O1 (strain ATCC 39315 / El Tor Inaba N16961)</name>
    <dbReference type="NCBI Taxonomy" id="243277"/>
    <lineage>
        <taxon>Bacteria</taxon>
        <taxon>Pseudomonadati</taxon>
        <taxon>Pseudomonadota</taxon>
        <taxon>Gammaproteobacteria</taxon>
        <taxon>Vibrionales</taxon>
        <taxon>Vibrionaceae</taxon>
        <taxon>Vibrio</taxon>
    </lineage>
</organism>
<proteinExistence type="inferred from homology"/>
<evidence type="ECO:0000250" key="1">
    <source>
        <dbReference type="UniProtKB" id="A5F660"/>
    </source>
</evidence>
<evidence type="ECO:0000250" key="2">
    <source>
        <dbReference type="UniProtKB" id="V5XKC3"/>
    </source>
</evidence>
<evidence type="ECO:0000255" key="3">
    <source>
        <dbReference type="PROSITE-ProRule" id="PRU00716"/>
    </source>
</evidence>
<evidence type="ECO:0000305" key="4"/>
<evidence type="ECO:0000312" key="5">
    <source>
        <dbReference type="EMBL" id="AAF95354.1"/>
    </source>
</evidence>